<proteinExistence type="inferred from homology"/>
<dbReference type="EMBL" id="AB261608">
    <property type="protein sequence ID" value="BAF37090.1"/>
    <property type="molecule type" value="Genomic_DNA"/>
</dbReference>
<dbReference type="SMR" id="A0PA81"/>
<dbReference type="GO" id="GO:0009279">
    <property type="term" value="C:cell outer membrane"/>
    <property type="evidence" value="ECO:0007669"/>
    <property type="project" value="UniProtKB-SubCell"/>
</dbReference>
<dbReference type="Gene3D" id="2.60.40.2100">
    <property type="match status" value="1"/>
</dbReference>
<dbReference type="InterPro" id="IPR014941">
    <property type="entry name" value="FimB/Mfa2/Mfa3"/>
</dbReference>
<dbReference type="Pfam" id="PF08842">
    <property type="entry name" value="Mfa2"/>
    <property type="match status" value="1"/>
</dbReference>
<dbReference type="PROSITE" id="PS51257">
    <property type="entry name" value="PROKAR_LIPOPROTEIN"/>
    <property type="match status" value="1"/>
</dbReference>
<organism>
    <name type="scientific">Porphyromonas gingivalis (strain ATCC 33277 / DSM 20709 / CIP 103683 / JCM 12257 / NCTC 11834 / 2561)</name>
    <dbReference type="NCBI Taxonomy" id="431947"/>
    <lineage>
        <taxon>Bacteria</taxon>
        <taxon>Pseudomonadati</taxon>
        <taxon>Bacteroidota</taxon>
        <taxon>Bacteroidia</taxon>
        <taxon>Bacteroidales</taxon>
        <taxon>Porphyromonadaceae</taxon>
        <taxon>Porphyromonas</taxon>
    </lineage>
</organism>
<feature type="signal peptide" evidence="1">
    <location>
        <begin position="1"/>
        <end position="22"/>
    </location>
</feature>
<feature type="chain" id="PRO_0000436787" description="Major fimbrium anchoring subunit FimB">
    <location>
        <begin position="23"/>
        <end position="303"/>
    </location>
</feature>
<feature type="lipid moiety-binding region" description="N-palmitoyl cysteine" evidence="1">
    <location>
        <position position="23"/>
    </location>
</feature>
<feature type="lipid moiety-binding region" description="S-diacylglycerol cysteine" evidence="1">
    <location>
        <position position="23"/>
    </location>
</feature>
<comment type="function">
    <text evidence="2 4">Anchoring subunit of the major fimbriae. Regulates fimbrial length (PubMed:20530728). These filamentous pili are attached to the cell surface; they mediate biofilm formation, adhesion onto host cells and onto other bacteria that are part of the oral microbiome. Fimbriae of P.gingivalis are major virulence factors (Probable).</text>
</comment>
<comment type="subunit">
    <text evidence="4 6">FimB is not part of the fimbrium itself, but anchors the fimbrium in the outer membrane (PubMed:20530728). Linear, head-to-tail oligomerization of fimbrial subunits mediates assembly of the fimbrium stalk, while the minor components FimC, FimD and FimE probably form the fimbrium tip (Probable). The anchoring subunit FimB limits fimbrium length and is important for solid fimbrium attachment to the outer membrane. In its absence, the major fimbriae become very long and are easily detached from the membrane (PubMed:20530728).</text>
</comment>
<comment type="subcellular location">
    <subcellularLocation>
        <location evidence="6">Cell outer membrane</location>
        <topology evidence="4">Lipid-anchor</topology>
    </subcellularLocation>
</comment>
<comment type="miscellaneous">
    <text evidence="6">The name (major fimbrium subunit) does not indicate the abundance of the protein, but is derived from the greater length of the major fimbriae. In strain ATCC 33277 and strain ATCC BAA-1703 / FDC 381, major fimbriae are 300 - 1600 nM in length and about 5 nm in diameter. In contrast, minor fimbriae are only about 80 - 120 nm long. This length difference is observed only in a small number of strains, including strain ATCC 33277 and strain ATCC BAA-1703 / FDC 381, and is due to a loss of function mutation in FimB, a protein that restricts fimbrial length in other strains.</text>
</comment>
<comment type="similarity">
    <text evidence="4">Belongs to the bacteroidetes fimbrillin superfamily. FimB/Mfa2 family.</text>
</comment>
<comment type="caution">
    <text evidence="5 6">According to PubMed:20530728, the fimB gene contains a premature stop codon that prevents expression of this protein in strain ATCC 33277 and strain ATCC BAA-1703 / FDC 381. This is the cause for the production of abnormally long fimbriae by these strains; in vitro mutagenesis that restores the full open reading frame leads to the production of shorter fimbriae in strain ATCC 33277 (PubMed:20530728). In contrast, there is no premature stop codon in the sequence reported by PubMed:17081195.</text>
</comment>
<comment type="online information" name="Protein Spotlight">
    <link uri="https://www.proteinspotlight.org/back_issues/182/"/>
    <text>A loosening of habits - Issue 182 of August 2016</text>
</comment>
<gene>
    <name evidence="4" type="primary">fimB</name>
</gene>
<name>FIMB_PORG3</name>
<keyword id="KW-0998">Cell outer membrane</keyword>
<keyword id="KW-0449">Lipoprotein</keyword>
<keyword id="KW-0472">Membrane</keyword>
<keyword id="KW-0564">Palmitate</keyword>
<keyword id="KW-0732">Signal</keyword>
<sequence>MNDAKKYIVSVLILLVAGMFGGCIKEDYSDCPRPFRLTVRAWDADMQDITETGAVQRVVIFVFDETGRRIDRLMMDAAQVAARKPIPLEYDGPTTVSFVAWANPDDHMLEETANVQNVKDLFFRLSSTDGIAQSPGDLFSGVLTCPIEYGSIEQGTDQTVDIYRRTAQVHIIIRGYQEWLEANGPRQLPDYADILLGETPDTYTGLAELIGNAVQYRPDGQIQNGDFISPIIRVYPTLDTTPLHLKLYAYGQELLNISTGSDGVPFIPVIGKMLNIYIDLRGANLNVLVSVTPWDVVQQYAEY</sequence>
<accession>A0PA81</accession>
<evidence type="ECO:0000255" key="1">
    <source>
        <dbReference type="PROSITE-ProRule" id="PRU00303"/>
    </source>
</evidence>
<evidence type="ECO:0000269" key="2">
    <source>
    </source>
</evidence>
<evidence type="ECO:0000303" key="3">
    <source>
    </source>
</evidence>
<evidence type="ECO:0000305" key="4"/>
<evidence type="ECO:0000305" key="5">
    <source>
    </source>
</evidence>
<evidence type="ECO:0000305" key="6">
    <source>
    </source>
</evidence>
<evidence type="ECO:0000312" key="7">
    <source>
        <dbReference type="EMBL" id="BAF37090.1"/>
    </source>
</evidence>
<protein>
    <recommendedName>
        <fullName evidence="4">Major fimbrium anchoring subunit FimB</fullName>
    </recommendedName>
</protein>
<reference evidence="7" key="1">
    <citation type="journal article" date="2007" name="Cell. Microbiol.">
        <title>Virulence of Porphyromonas gingivalis is altered by substitution of fimbria gene with different genotype.</title>
        <authorList>
            <person name="Kato T."/>
            <person name="Kawai S."/>
            <person name="Nakano K."/>
            <person name="Inaba H."/>
            <person name="Kuboniwa M."/>
            <person name="Nakagawa I."/>
            <person name="Tsuda K."/>
            <person name="Omori H."/>
            <person name="Ooshima T."/>
            <person name="Yoshimori T."/>
            <person name="Amano A."/>
        </authorList>
    </citation>
    <scope>NUCLEOTIDE SEQUENCE [GENOMIC DNA]</scope>
    <source>
        <strain evidence="7">ATCC 33277 / DSM 20709 / CIP 103683 / JCM 12257 / NCTC 11834 / 2561</strain>
    </source>
</reference>
<reference key="2">
    <citation type="journal article" date="2010" name="J. Dent. Res.">
        <title>FimB regulates FimA fimbriation in Porphyromonas gingivalis.</title>
        <authorList>
            <person name="Nagano K."/>
            <person name="Hasegawa Y."/>
            <person name="Murakami Y."/>
            <person name="Nishiyama S."/>
            <person name="Yoshimura F."/>
        </authorList>
    </citation>
    <scope>SUBCELLULAR LOCATION</scope>
    <scope>FUNCTION</scope>
    <scope>MISCELLANEOUS</scope>
    <source>
        <strain evidence="3">ATCC 33277 / DSM 20709 / CIP 103683 / JCM 12257 / NCTC 11834 / 2561</strain>
    </source>
</reference>